<protein>
    <recommendedName>
        <fullName evidence="1">Ribosome maturation factor RimP</fullName>
    </recommendedName>
</protein>
<reference key="1">
    <citation type="journal article" date="2010" name="J. Bacteriol.">
        <title>The genetic basis of laboratory adaptation in Caulobacter crescentus.</title>
        <authorList>
            <person name="Marks M.E."/>
            <person name="Castro-Rojas C.M."/>
            <person name="Teiling C."/>
            <person name="Du L."/>
            <person name="Kapatral V."/>
            <person name="Walunas T.L."/>
            <person name="Crosson S."/>
        </authorList>
    </citation>
    <scope>NUCLEOTIDE SEQUENCE [LARGE SCALE GENOMIC DNA]</scope>
    <source>
        <strain>NA1000 / CB15N</strain>
    </source>
</reference>
<dbReference type="EMBL" id="CP001340">
    <property type="protein sequence ID" value="ACL93511.1"/>
    <property type="molecule type" value="Genomic_DNA"/>
</dbReference>
<dbReference type="RefSeq" id="WP_012639861.1">
    <property type="nucleotide sequence ID" value="NC_011916.1"/>
</dbReference>
<dbReference type="RefSeq" id="YP_002515419.1">
    <property type="nucleotide sequence ID" value="NC_011916.1"/>
</dbReference>
<dbReference type="SMR" id="B8GX01"/>
<dbReference type="GeneID" id="7332134"/>
<dbReference type="KEGG" id="ccs:CCNA_00044"/>
<dbReference type="PATRIC" id="fig|565050.3.peg.44"/>
<dbReference type="HOGENOM" id="CLU_070525_0_1_5"/>
<dbReference type="OrthoDB" id="9805006at2"/>
<dbReference type="PhylomeDB" id="B8GX01"/>
<dbReference type="Proteomes" id="UP000001364">
    <property type="component" value="Chromosome"/>
</dbReference>
<dbReference type="GO" id="GO:0005829">
    <property type="term" value="C:cytosol"/>
    <property type="evidence" value="ECO:0007669"/>
    <property type="project" value="TreeGrafter"/>
</dbReference>
<dbReference type="GO" id="GO:0000028">
    <property type="term" value="P:ribosomal small subunit assembly"/>
    <property type="evidence" value="ECO:0007669"/>
    <property type="project" value="TreeGrafter"/>
</dbReference>
<dbReference type="GO" id="GO:0006412">
    <property type="term" value="P:translation"/>
    <property type="evidence" value="ECO:0007669"/>
    <property type="project" value="TreeGrafter"/>
</dbReference>
<dbReference type="CDD" id="cd01734">
    <property type="entry name" value="YlxS_C"/>
    <property type="match status" value="1"/>
</dbReference>
<dbReference type="Gene3D" id="2.30.30.180">
    <property type="entry name" value="Ribosome maturation factor RimP, C-terminal domain"/>
    <property type="match status" value="1"/>
</dbReference>
<dbReference type="Gene3D" id="3.30.300.70">
    <property type="entry name" value="RimP-like superfamily, N-terminal"/>
    <property type="match status" value="1"/>
</dbReference>
<dbReference type="HAMAP" id="MF_01077">
    <property type="entry name" value="RimP"/>
    <property type="match status" value="1"/>
</dbReference>
<dbReference type="InterPro" id="IPR003728">
    <property type="entry name" value="Ribosome_maturation_RimP"/>
</dbReference>
<dbReference type="InterPro" id="IPR028998">
    <property type="entry name" value="RimP_C"/>
</dbReference>
<dbReference type="InterPro" id="IPR036847">
    <property type="entry name" value="RimP_C_sf"/>
</dbReference>
<dbReference type="InterPro" id="IPR028989">
    <property type="entry name" value="RimP_N"/>
</dbReference>
<dbReference type="InterPro" id="IPR035956">
    <property type="entry name" value="RimP_N_sf"/>
</dbReference>
<dbReference type="NCBIfam" id="NF000932">
    <property type="entry name" value="PRK00092.2-5"/>
    <property type="match status" value="1"/>
</dbReference>
<dbReference type="PANTHER" id="PTHR33867">
    <property type="entry name" value="RIBOSOME MATURATION FACTOR RIMP"/>
    <property type="match status" value="1"/>
</dbReference>
<dbReference type="PANTHER" id="PTHR33867:SF1">
    <property type="entry name" value="RIBOSOME MATURATION FACTOR RIMP"/>
    <property type="match status" value="1"/>
</dbReference>
<dbReference type="Pfam" id="PF17384">
    <property type="entry name" value="DUF150_C"/>
    <property type="match status" value="1"/>
</dbReference>
<dbReference type="Pfam" id="PF02576">
    <property type="entry name" value="RimP_N"/>
    <property type="match status" value="1"/>
</dbReference>
<dbReference type="SUPFAM" id="SSF74942">
    <property type="entry name" value="YhbC-like, C-terminal domain"/>
    <property type="match status" value="1"/>
</dbReference>
<dbReference type="SUPFAM" id="SSF75420">
    <property type="entry name" value="YhbC-like, N-terminal domain"/>
    <property type="match status" value="1"/>
</dbReference>
<keyword id="KW-0963">Cytoplasm</keyword>
<keyword id="KW-1185">Reference proteome</keyword>
<keyword id="KW-0690">Ribosome biogenesis</keyword>
<sequence>MRGKTQEDRDLIEMLDPVAESLGYEIVRLRLMGGTEQRRLQIMAEHPLLEDGSGGDMNVEDCAKLSRAVSEVLDAADPIAGEYTLEVSSPGIDRPLTRLKDFDDYAGLEARIELDRVAEGRKRFKGELAGVEDDQVGLNIEGEDDVTVYFPFAWVIDAKLVMTDALMERGAKQRAARLESDNEDLSESEED</sequence>
<accession>B8GX01</accession>
<gene>
    <name evidence="1" type="primary">rimP</name>
    <name type="ordered locus">CCNA_00044</name>
</gene>
<evidence type="ECO:0000255" key="1">
    <source>
        <dbReference type="HAMAP-Rule" id="MF_01077"/>
    </source>
</evidence>
<comment type="function">
    <text evidence="1">Required for maturation of 30S ribosomal subunits.</text>
</comment>
<comment type="subcellular location">
    <subcellularLocation>
        <location evidence="1">Cytoplasm</location>
    </subcellularLocation>
</comment>
<comment type="similarity">
    <text evidence="1">Belongs to the RimP family.</text>
</comment>
<organism>
    <name type="scientific">Caulobacter vibrioides (strain NA1000 / CB15N)</name>
    <name type="common">Caulobacter crescentus</name>
    <dbReference type="NCBI Taxonomy" id="565050"/>
    <lineage>
        <taxon>Bacteria</taxon>
        <taxon>Pseudomonadati</taxon>
        <taxon>Pseudomonadota</taxon>
        <taxon>Alphaproteobacteria</taxon>
        <taxon>Caulobacterales</taxon>
        <taxon>Caulobacteraceae</taxon>
        <taxon>Caulobacter</taxon>
    </lineage>
</organism>
<feature type="chain" id="PRO_0000384622" description="Ribosome maturation factor RimP">
    <location>
        <begin position="1"/>
        <end position="191"/>
    </location>
</feature>
<proteinExistence type="inferred from homology"/>
<name>RIMP_CAUVN</name>